<reference key="1">
    <citation type="journal article" date="1981" name="Curr. Genet.">
        <title>Analysis of a DNA segment from rat liver mitochondria containing the genes for the cytochrome oxidase subunits I, II and III, ATPase subunit 6, and several tRNA genes.</title>
        <authorList>
            <person name="Grosskopf R."/>
            <person name="Feldmann H."/>
        </authorList>
    </citation>
    <scope>NUCLEOTIDE SEQUENCE [GENOMIC DNA]</scope>
    <source>
        <strain>Sprague-Dawley</strain>
        <tissue>Liver</tissue>
    </source>
</reference>
<reference key="2">
    <citation type="journal article" date="1989" name="J. Mol. Evol.">
        <title>The complete nucleotide sequence of the Rattus norvegicus mitochondrial genome: cryptic signals revealed by comparative analysis between vertebrates.</title>
        <authorList>
            <person name="Gadaleta G."/>
            <person name="Pepe G."/>
            <person name="de Candia G."/>
            <person name="Quagliariello C."/>
            <person name="Sbisa E."/>
            <person name="Saccone C."/>
        </authorList>
    </citation>
    <scope>NUCLEOTIDE SEQUENCE [GENOMIC DNA]</scope>
    <source>
        <strain>Wistar</strain>
    </source>
</reference>
<reference key="3">
    <citation type="journal article" date="1995" name="FASEB J.">
        <title>A point mutation in the mitochondrial DNA of diabetes-prone BHE/cdb rats.</title>
        <authorList>
            <person name="Mathews C.E."/>
            <person name="McGraw R.A."/>
            <person name="Berdanier C.D."/>
        </authorList>
    </citation>
    <scope>NUCLEOTIDE SEQUENCE [GENOMIC DNA]</scope>
    <source>
        <strain>BHE/CDB</strain>
        <strain>Sprague-Dawley</strain>
        <tissue>Liver</tissue>
    </source>
</reference>
<reference key="4">
    <citation type="journal article" date="2004" name="Nature">
        <title>Genome sequence of the Brown Norway rat yields insights into mammalian evolution.</title>
        <authorList>
            <person name="Gibbs R.A."/>
            <person name="Weinstock G.M."/>
            <person name="Metzker M.L."/>
            <person name="Muzny D.M."/>
            <person name="Sodergren E.J."/>
            <person name="Scherer S."/>
            <person name="Scott G."/>
            <person name="Steffen D."/>
            <person name="Worley K.C."/>
            <person name="Burch P.E."/>
            <person name="Okwuonu G."/>
            <person name="Hines S."/>
            <person name="Lewis L."/>
            <person name="Deramo C."/>
            <person name="Delgado O."/>
            <person name="Dugan-Rocha S."/>
            <person name="Miner G."/>
            <person name="Morgan M."/>
            <person name="Hawes A."/>
            <person name="Gill R."/>
            <person name="Holt R.A."/>
            <person name="Adams M.D."/>
            <person name="Amanatides P.G."/>
            <person name="Baden-Tillson H."/>
            <person name="Barnstead M."/>
            <person name="Chin S."/>
            <person name="Evans C.A."/>
            <person name="Ferriera S."/>
            <person name="Fosler C."/>
            <person name="Glodek A."/>
            <person name="Gu Z."/>
            <person name="Jennings D."/>
            <person name="Kraft C.L."/>
            <person name="Nguyen T."/>
            <person name="Pfannkoch C.M."/>
            <person name="Sitter C."/>
            <person name="Sutton G.G."/>
            <person name="Venter J.C."/>
            <person name="Woodage T."/>
            <person name="Smith D."/>
            <person name="Lee H.-M."/>
            <person name="Gustafson E."/>
            <person name="Cahill P."/>
            <person name="Kana A."/>
            <person name="Doucette-Stamm L."/>
            <person name="Weinstock K."/>
            <person name="Fechtel K."/>
            <person name="Weiss R.B."/>
            <person name="Dunn D.M."/>
            <person name="Green E.D."/>
            <person name="Blakesley R.W."/>
            <person name="Bouffard G.G."/>
            <person name="De Jong P.J."/>
            <person name="Osoegawa K."/>
            <person name="Zhu B."/>
            <person name="Marra M."/>
            <person name="Schein J."/>
            <person name="Bosdet I."/>
            <person name="Fjell C."/>
            <person name="Jones S."/>
            <person name="Krzywinski M."/>
            <person name="Mathewson C."/>
            <person name="Siddiqui A."/>
            <person name="Wye N."/>
            <person name="McPherson J."/>
            <person name="Zhao S."/>
            <person name="Fraser C.M."/>
            <person name="Shetty J."/>
            <person name="Shatsman S."/>
            <person name="Geer K."/>
            <person name="Chen Y."/>
            <person name="Abramzon S."/>
            <person name="Nierman W.C."/>
            <person name="Havlak P.H."/>
            <person name="Chen R."/>
            <person name="Durbin K.J."/>
            <person name="Egan A."/>
            <person name="Ren Y."/>
            <person name="Song X.-Z."/>
            <person name="Li B."/>
            <person name="Liu Y."/>
            <person name="Qin X."/>
            <person name="Cawley S."/>
            <person name="Cooney A.J."/>
            <person name="D'Souza L.M."/>
            <person name="Martin K."/>
            <person name="Wu J.Q."/>
            <person name="Gonzalez-Garay M.L."/>
            <person name="Jackson A.R."/>
            <person name="Kalafus K.J."/>
            <person name="McLeod M.P."/>
            <person name="Milosavljevic A."/>
            <person name="Virk D."/>
            <person name="Volkov A."/>
            <person name="Wheeler D.A."/>
            <person name="Zhang Z."/>
            <person name="Bailey J.A."/>
            <person name="Eichler E.E."/>
            <person name="Tuzun E."/>
            <person name="Birney E."/>
            <person name="Mongin E."/>
            <person name="Ureta-Vidal A."/>
            <person name="Woodwark C."/>
            <person name="Zdobnov E."/>
            <person name="Bork P."/>
            <person name="Suyama M."/>
            <person name="Torrents D."/>
            <person name="Alexandersson M."/>
            <person name="Trask B.J."/>
            <person name="Young J.M."/>
            <person name="Huang H."/>
            <person name="Wang H."/>
            <person name="Xing H."/>
            <person name="Daniels S."/>
            <person name="Gietzen D."/>
            <person name="Schmidt J."/>
            <person name="Stevens K."/>
            <person name="Vitt U."/>
            <person name="Wingrove J."/>
            <person name="Camara F."/>
            <person name="Mar Alba M."/>
            <person name="Abril J.F."/>
            <person name="Guigo R."/>
            <person name="Smit A."/>
            <person name="Dubchak I."/>
            <person name="Rubin E.M."/>
            <person name="Couronne O."/>
            <person name="Poliakov A."/>
            <person name="Huebner N."/>
            <person name="Ganten D."/>
            <person name="Goesele C."/>
            <person name="Hummel O."/>
            <person name="Kreitler T."/>
            <person name="Lee Y.-A."/>
            <person name="Monti J."/>
            <person name="Schulz H."/>
            <person name="Zimdahl H."/>
            <person name="Himmelbauer H."/>
            <person name="Lehrach H."/>
            <person name="Jacob H.J."/>
            <person name="Bromberg S."/>
            <person name="Gullings-Handley J."/>
            <person name="Jensen-Seaman M.I."/>
            <person name="Kwitek A.E."/>
            <person name="Lazar J."/>
            <person name="Pasko D."/>
            <person name="Tonellato P.J."/>
            <person name="Twigger S."/>
            <person name="Ponting C.P."/>
            <person name="Duarte J.M."/>
            <person name="Rice S."/>
            <person name="Goodstadt L."/>
            <person name="Beatson S.A."/>
            <person name="Emes R.D."/>
            <person name="Winter E.E."/>
            <person name="Webber C."/>
            <person name="Brandt P."/>
            <person name="Nyakatura G."/>
            <person name="Adetobi M."/>
            <person name="Chiaromonte F."/>
            <person name="Elnitski L."/>
            <person name="Eswara P."/>
            <person name="Hardison R.C."/>
            <person name="Hou M."/>
            <person name="Kolbe D."/>
            <person name="Makova K."/>
            <person name="Miller W."/>
            <person name="Nekrutenko A."/>
            <person name="Riemer C."/>
            <person name="Schwartz S."/>
            <person name="Taylor J."/>
            <person name="Yang S."/>
            <person name="Zhang Y."/>
            <person name="Lindpaintner K."/>
            <person name="Andrews T.D."/>
            <person name="Caccamo M."/>
            <person name="Clamp M."/>
            <person name="Clarke L."/>
            <person name="Curwen V."/>
            <person name="Durbin R.M."/>
            <person name="Eyras E."/>
            <person name="Searle S.M."/>
            <person name="Cooper G.M."/>
            <person name="Batzoglou S."/>
            <person name="Brudno M."/>
            <person name="Sidow A."/>
            <person name="Stone E.A."/>
            <person name="Payseur B.A."/>
            <person name="Bourque G."/>
            <person name="Lopez-Otin C."/>
            <person name="Puente X.S."/>
            <person name="Chakrabarti K."/>
            <person name="Chatterji S."/>
            <person name="Dewey C."/>
            <person name="Pachter L."/>
            <person name="Bray N."/>
            <person name="Yap V.B."/>
            <person name="Caspi A."/>
            <person name="Tesler G."/>
            <person name="Pevzner P.A."/>
            <person name="Haussler D."/>
            <person name="Roskin K.M."/>
            <person name="Baertsch R."/>
            <person name="Clawson H."/>
            <person name="Furey T.S."/>
            <person name="Hinrichs A.S."/>
            <person name="Karolchik D."/>
            <person name="Kent W.J."/>
            <person name="Rosenbloom K.R."/>
            <person name="Trumbower H."/>
            <person name="Weirauch M."/>
            <person name="Cooper D.N."/>
            <person name="Stenson P.D."/>
            <person name="Ma B."/>
            <person name="Brent M."/>
            <person name="Arumugam M."/>
            <person name="Shteynberg D."/>
            <person name="Copley R.R."/>
            <person name="Taylor M.S."/>
            <person name="Riethman H."/>
            <person name="Mudunuri U."/>
            <person name="Peterson J."/>
            <person name="Guyer M."/>
            <person name="Felsenfeld A."/>
            <person name="Old S."/>
            <person name="Mockrin S."/>
            <person name="Collins F.S."/>
        </authorList>
    </citation>
    <scope>NUCLEOTIDE SEQUENCE [LARGE SCALE GENOMIC DNA]</scope>
    <source>
        <strain>Brown Norway</strain>
    </source>
</reference>
<reference key="5">
    <citation type="journal article" date="2001" name="Immunity">
        <title>Two different, highly exposed, bulged structures for an unusually long peptide bound to rat MHC class I RT1-A(a).</title>
        <authorList>
            <person name="Speir J.A."/>
            <person name="Stevens J."/>
            <person name="Joly E."/>
            <person name="Butcher G.W."/>
            <person name="Wilson I.A."/>
        </authorList>
    </citation>
    <scope>X-RAY CRYSTALLOGRAPHY (2.55 ANGSTROMS) OF 29-41</scope>
</reference>
<proteinExistence type="evidence at protein level"/>
<geneLocation type="mitochondrion"/>
<gene>
    <name evidence="4" type="primary">Mt-atp6</name>
    <name type="synonym">Atp6</name>
    <name type="synonym">Atpase6</name>
    <name type="synonym">Mtatp6</name>
</gene>
<protein>
    <recommendedName>
        <fullName evidence="3">ATP synthase F(0) complex subunit a</fullName>
    </recommendedName>
    <alternativeName>
        <fullName>F-ATPase protein 6</fullName>
    </alternativeName>
    <alternativeName>
        <fullName evidence="1">Proton-conducting channel, ATP synthase F(0) complex subunit a</fullName>
    </alternativeName>
</protein>
<feature type="chain" id="PRO_0000082163" description="ATP synthase F(0) complex subunit a">
    <location>
        <begin position="1"/>
        <end position="226"/>
    </location>
</feature>
<feature type="transmembrane region" description="Helical" evidence="2">
    <location>
        <begin position="6"/>
        <end position="26"/>
    </location>
</feature>
<feature type="transmembrane region" description="Helical" evidence="2">
    <location>
        <begin position="68"/>
        <end position="88"/>
    </location>
</feature>
<feature type="transmembrane region" description="Helical" evidence="2">
    <location>
        <begin position="97"/>
        <end position="117"/>
    </location>
</feature>
<feature type="transmembrane region" description="Helical" evidence="2">
    <location>
        <begin position="138"/>
        <end position="158"/>
    </location>
</feature>
<feature type="transmembrane region" description="Helical" evidence="2">
    <location>
        <begin position="164"/>
        <end position="184"/>
    </location>
</feature>
<feature type="transmembrane region" description="Helical" evidence="2">
    <location>
        <begin position="189"/>
        <end position="209"/>
    </location>
</feature>
<feature type="sequence conflict" description="In Ref. 1; AAD15019." evidence="3" ref="1">
    <original>A</original>
    <variation>P</variation>
    <location>
        <position position="7"/>
    </location>
</feature>
<feature type="sequence conflict" description="In Ref. 2; CAA32959." evidence="3" ref="2">
    <original>N</original>
    <variation>D</variation>
    <location>
        <position position="101"/>
    </location>
</feature>
<feature type="sequence conflict" description="In Ref. 2; CAA32959 and 3; AAD22965." evidence="3" ref="2 3">
    <original>L</original>
    <variation>S</variation>
    <location>
        <position position="129"/>
    </location>
</feature>
<feature type="sequence conflict" description="In Ref. 1; AAD15019." evidence="3" ref="1">
    <original>A</original>
    <variation>V</variation>
    <location>
        <position position="205"/>
    </location>
</feature>
<feature type="strand" evidence="5">
    <location>
        <begin position="33"/>
        <end position="36"/>
    </location>
</feature>
<comment type="function">
    <text evidence="1">Subunit a, of the mitochondrial membrane ATP synthase complex (F(1)F(0) ATP synthase or Complex V) that produces ATP from ADP in the presence of a proton gradient across the membrane which is generated by electron transport complexes of the respiratory chain. ATP synthase complex consist of a soluble F(1) head domain - the catalytic core - and a membrane F(1) domain - the membrane proton channel. These two domains are linked by a central stalk rotating inside the F(1) region and a stationary peripheral stalk. During catalysis, ATP synthesis in the catalytic domain of F(1) is coupled via a rotary mechanism of the central stalk subunits to proton translocation. With the subunit c (ATP5MC1), forms the proton-conducting channel in the F(0) domain, that contains two crucial half-channels (inlet and outlet) that facilitate proton movement from the mitochondrial intermembrane space (IMS) into the matrix. Protons are taken up via the inlet half-channel and released through the outlet half-channel, following a Grotthuss mechanism.</text>
</comment>
<comment type="catalytic activity">
    <reaction evidence="1">
        <text>H(+)(in) = H(+)(out)</text>
        <dbReference type="Rhea" id="RHEA:34979"/>
        <dbReference type="ChEBI" id="CHEBI:15378"/>
    </reaction>
</comment>
<comment type="subunit">
    <text evidence="1">Component of the ATP synthase complex composed at least of ATP5F1A/subunit alpha, ATP5F1B/subunit beta, ATP5MC1/subunit c (homooctomer), MT-ATP6/subunit a, MT-ATP8/subunit 8, ATP5ME/subunit e, ATP5MF/subunit f, ATP5MG/subunit g, ATP5MK/subunit k, ATP5MJ/subunit j, ATP5F1C/subunit gamma, ATP5F1D/subunit delta, ATP5F1E/subunit epsilon, ATP5PF/subunit F6, ATP5PB/subunit b, ATP5PD/subunit d, ATP5PO/subunit OSCP. ATP synthase complex consists of a soluble F(1) head domain (subunits alpha(3) and beta(3)) - the catalytic core - and a membrane F(0) domain - the membrane proton channel (subunits c, a, 8, e, f, g, k and j). These two domains are linked by a central stalk (subunits gamma, delta, and epsilon) rotating inside the F1 region and a stationary peripheral stalk (subunits F6, b, d, and OSCP). Interacts with DNAJC30; interaction is direct.</text>
</comment>
<comment type="subcellular location">
    <subcellularLocation>
        <location>Mitochondrion inner membrane</location>
        <topology>Multi-pass membrane protein</topology>
    </subcellularLocation>
</comment>
<comment type="similarity">
    <text evidence="3">Belongs to the ATPase A chain family.</text>
</comment>
<organism>
    <name type="scientific">Rattus norvegicus</name>
    <name type="common">Rat</name>
    <dbReference type="NCBI Taxonomy" id="10116"/>
    <lineage>
        <taxon>Eukaryota</taxon>
        <taxon>Metazoa</taxon>
        <taxon>Chordata</taxon>
        <taxon>Craniata</taxon>
        <taxon>Vertebrata</taxon>
        <taxon>Euteleostomi</taxon>
        <taxon>Mammalia</taxon>
        <taxon>Eutheria</taxon>
        <taxon>Euarchontoglires</taxon>
        <taxon>Glires</taxon>
        <taxon>Rodentia</taxon>
        <taxon>Myomorpha</taxon>
        <taxon>Muroidea</taxon>
        <taxon>Muridae</taxon>
        <taxon>Murinae</taxon>
        <taxon>Rattus</taxon>
    </lineage>
</organism>
<dbReference type="EMBL" id="J01435">
    <property type="protein sequence ID" value="AAD15019.1"/>
    <property type="molecule type" value="Genomic_DNA"/>
</dbReference>
<dbReference type="EMBL" id="X14848">
    <property type="protein sequence ID" value="CAA32959.1"/>
    <property type="molecule type" value="Genomic_DNA"/>
</dbReference>
<dbReference type="EMBL" id="AF115770">
    <property type="protein sequence ID" value="AAD22965.1"/>
    <property type="molecule type" value="Genomic_DNA"/>
</dbReference>
<dbReference type="EMBL" id="AY172581">
    <property type="protein sequence ID" value="AAN77599.1"/>
    <property type="molecule type" value="Genomic_DNA"/>
</dbReference>
<dbReference type="PIR" id="S04752">
    <property type="entry name" value="S04752"/>
</dbReference>
<dbReference type="RefSeq" id="AP_004897.1">
    <property type="nucleotide sequence ID" value="AC_000022.2"/>
</dbReference>
<dbReference type="RefSeq" id="YP_665634.1">
    <property type="nucleotide sequence ID" value="NC_001665.2"/>
</dbReference>
<dbReference type="PDB" id="1ED3">
    <property type="method" value="X-ray"/>
    <property type="resolution" value="2.55 A"/>
    <property type="chains" value="C/F=29-41"/>
</dbReference>
<dbReference type="PDBsum" id="1ED3"/>
<dbReference type="SMR" id="P05504"/>
<dbReference type="CORUM" id="P05504"/>
<dbReference type="FunCoup" id="P05504">
    <property type="interactions" value="54"/>
</dbReference>
<dbReference type="STRING" id="10116.ENSRNOP00000049769"/>
<dbReference type="BindingDB" id="P05504"/>
<dbReference type="PaxDb" id="10116-ENSRNOP00000049769"/>
<dbReference type="Ensembl" id="ENSRNOT00000046108.3">
    <property type="protein sequence ID" value="ENSRNOP00000049769.3"/>
    <property type="gene ID" value="ENSRNOG00000031979.3"/>
</dbReference>
<dbReference type="GeneID" id="26197"/>
<dbReference type="KEGG" id="rno:26197"/>
<dbReference type="AGR" id="RGD:621239"/>
<dbReference type="CTD" id="4508"/>
<dbReference type="RGD" id="621239">
    <property type="gene designation" value="Mt-atp6"/>
</dbReference>
<dbReference type="eggNOG" id="KOG4665">
    <property type="taxonomic scope" value="Eukaryota"/>
</dbReference>
<dbReference type="GeneTree" id="ENSGT00390000005568"/>
<dbReference type="HOGENOM" id="CLU_041018_0_2_1"/>
<dbReference type="InParanoid" id="P05504"/>
<dbReference type="OMA" id="FFDQFMS"/>
<dbReference type="OrthoDB" id="86333at9989"/>
<dbReference type="Reactome" id="R-RNO-163210">
    <property type="pathway name" value="Formation of ATP by chemiosmotic coupling"/>
</dbReference>
<dbReference type="Reactome" id="R-RNO-8949613">
    <property type="pathway name" value="Cristae formation"/>
</dbReference>
<dbReference type="Reactome" id="R-RNO-9837999">
    <property type="pathway name" value="Mitochondrial protein degradation"/>
</dbReference>
<dbReference type="EvolutionaryTrace" id="P05504"/>
<dbReference type="PRO" id="PR:P05504"/>
<dbReference type="Proteomes" id="UP000002494">
    <property type="component" value="Mitochondrion"/>
</dbReference>
<dbReference type="Bgee" id="ENSRNOG00000031979">
    <property type="expression patterns" value="Expressed in cerebellum and 19 other cell types or tissues"/>
</dbReference>
<dbReference type="ExpressionAtlas" id="P05504">
    <property type="expression patterns" value="baseline and differential"/>
</dbReference>
<dbReference type="GO" id="GO:0005743">
    <property type="term" value="C:mitochondrial inner membrane"/>
    <property type="evidence" value="ECO:0007669"/>
    <property type="project" value="UniProtKB-SubCell"/>
</dbReference>
<dbReference type="GO" id="GO:0045259">
    <property type="term" value="C:proton-transporting ATP synthase complex"/>
    <property type="evidence" value="ECO:0000250"/>
    <property type="project" value="UniProtKB"/>
</dbReference>
<dbReference type="GO" id="GO:0015252">
    <property type="term" value="F:proton channel activity"/>
    <property type="evidence" value="ECO:0000250"/>
    <property type="project" value="UniProtKB"/>
</dbReference>
<dbReference type="GO" id="GO:0046933">
    <property type="term" value="F:proton-transporting ATP synthase activity, rotational mechanism"/>
    <property type="evidence" value="ECO:0007669"/>
    <property type="project" value="Ensembl"/>
</dbReference>
<dbReference type="GO" id="GO:0015986">
    <property type="term" value="P:proton motive force-driven ATP synthesis"/>
    <property type="evidence" value="ECO:0000250"/>
    <property type="project" value="UniProtKB"/>
</dbReference>
<dbReference type="GO" id="GO:0042776">
    <property type="term" value="P:proton motive force-driven mitochondrial ATP synthesis"/>
    <property type="evidence" value="ECO:0000266"/>
    <property type="project" value="RGD"/>
</dbReference>
<dbReference type="GO" id="GO:1902600">
    <property type="term" value="P:proton transmembrane transport"/>
    <property type="evidence" value="ECO:0000250"/>
    <property type="project" value="UniProtKB"/>
</dbReference>
<dbReference type="GO" id="GO:0055093">
    <property type="term" value="P:response to hyperoxia"/>
    <property type="evidence" value="ECO:0000270"/>
    <property type="project" value="RGD"/>
</dbReference>
<dbReference type="CDD" id="cd00310">
    <property type="entry name" value="ATP-synt_Fo_a_6"/>
    <property type="match status" value="1"/>
</dbReference>
<dbReference type="FunFam" id="1.20.120.220:FF:000004">
    <property type="entry name" value="ATP synthase subunit a"/>
    <property type="match status" value="1"/>
</dbReference>
<dbReference type="Gene3D" id="1.20.120.220">
    <property type="entry name" value="ATP synthase, F0 complex, subunit A"/>
    <property type="match status" value="1"/>
</dbReference>
<dbReference type="InterPro" id="IPR000568">
    <property type="entry name" value="ATP_synth_F0_asu"/>
</dbReference>
<dbReference type="InterPro" id="IPR023011">
    <property type="entry name" value="ATP_synth_F0_asu_AS"/>
</dbReference>
<dbReference type="InterPro" id="IPR045083">
    <property type="entry name" value="ATP_synth_F0_asu_bact/mt"/>
</dbReference>
<dbReference type="InterPro" id="IPR035908">
    <property type="entry name" value="F0_ATP_A_sf"/>
</dbReference>
<dbReference type="NCBIfam" id="TIGR01131">
    <property type="entry name" value="ATP_synt_6_or_A"/>
    <property type="match status" value="1"/>
</dbReference>
<dbReference type="PANTHER" id="PTHR11410">
    <property type="entry name" value="ATP SYNTHASE SUBUNIT A"/>
    <property type="match status" value="1"/>
</dbReference>
<dbReference type="PANTHER" id="PTHR11410:SF0">
    <property type="entry name" value="ATP SYNTHASE SUBUNIT A"/>
    <property type="match status" value="1"/>
</dbReference>
<dbReference type="Pfam" id="PF00119">
    <property type="entry name" value="ATP-synt_A"/>
    <property type="match status" value="1"/>
</dbReference>
<dbReference type="PRINTS" id="PR00123">
    <property type="entry name" value="ATPASEA"/>
</dbReference>
<dbReference type="SUPFAM" id="SSF81336">
    <property type="entry name" value="F1F0 ATP synthase subunit A"/>
    <property type="match status" value="1"/>
</dbReference>
<dbReference type="PROSITE" id="PS00449">
    <property type="entry name" value="ATPASE_A"/>
    <property type="match status" value="1"/>
</dbReference>
<sequence length="226" mass="25076">MNENLFASFITPTMMGLPIVVTIIMFPSILFPSSERLISNRLHSFQHWLIKLIIKQMMLIHTPKGRTWALMIVSLIMFIGSTNLLGLLPHTFTPTTQLSMNLSMAIPLWAGAVILGFRHKLKNSLAHFLPQGTPISLIPMLIIIETISLFIQPMALAVRLTANITAGHLLMHLIGGATLVLMDISPPTATITFIILLLLTVLEFAVALIQAYVFTLLVSLYLHDNT</sequence>
<accession>P05504</accession>
<accession>Q9T2E9</accession>
<name>ATP6_RAT</name>
<keyword id="KW-0002">3D-structure</keyword>
<keyword id="KW-0066">ATP synthesis</keyword>
<keyword id="KW-0138">CF(0)</keyword>
<keyword id="KW-0375">Hydrogen ion transport</keyword>
<keyword id="KW-0406">Ion transport</keyword>
<keyword id="KW-0472">Membrane</keyword>
<keyword id="KW-0496">Mitochondrion</keyword>
<keyword id="KW-0999">Mitochondrion inner membrane</keyword>
<keyword id="KW-1185">Reference proteome</keyword>
<keyword id="KW-0812">Transmembrane</keyword>
<keyword id="KW-1133">Transmembrane helix</keyword>
<keyword id="KW-0813">Transport</keyword>
<evidence type="ECO:0000250" key="1">
    <source>
        <dbReference type="UniProtKB" id="P00846"/>
    </source>
</evidence>
<evidence type="ECO:0000255" key="2"/>
<evidence type="ECO:0000305" key="3"/>
<evidence type="ECO:0000312" key="4">
    <source>
        <dbReference type="RGD" id="621239"/>
    </source>
</evidence>
<evidence type="ECO:0007829" key="5">
    <source>
        <dbReference type="PDB" id="1ED3"/>
    </source>
</evidence>